<protein>
    <recommendedName>
        <fullName>Anionic peptide clone 8</fullName>
    </recommendedName>
</protein>
<keyword id="KW-0044">Antibiotic</keyword>
<keyword id="KW-0929">Antimicrobial</keyword>
<keyword id="KW-0964">Secreted</keyword>
<keyword id="KW-0732">Signal</keyword>
<sequence length="74" mass="8397">MVSKSLIVLLLVSVLVSTFFTTEAYPASYDDDFDALDDLDDLDLDDLLDLEPADLVLLDMWANMLDSQDFEDFE</sequence>
<evidence type="ECO:0000250" key="1"/>
<evidence type="ECO:0000255" key="2"/>
<evidence type="ECO:0000305" key="3"/>
<name>NDB2T_TITCO</name>
<reference key="1">
    <citation type="journal article" date="2005" name="Toxicon">
        <title>The Brazilian scorpion Tityus costatus Karsch: genes, peptides and function.</title>
        <authorList>
            <person name="Diego-Garcia E."/>
            <person name="Batista C.V.F."/>
            <person name="Garcia-Gomez B.I."/>
            <person name="Lucas S."/>
            <person name="Candido D.M."/>
            <person name="Gomez-Lagunas F."/>
            <person name="Possani L.D."/>
        </authorList>
    </citation>
    <scope>NUCLEOTIDE SEQUENCE [MRNA]</scope>
    <source>
        <tissue>Venom gland</tissue>
    </source>
</reference>
<comment type="function">
    <text evidence="1">May be an antimicrobial peptide.</text>
</comment>
<comment type="subcellular location">
    <subcellularLocation>
        <location evidence="1">Secreted</location>
    </subcellularLocation>
</comment>
<comment type="tissue specificity">
    <text evidence="3">Expressed by the venom gland.</text>
</comment>
<comment type="similarity">
    <text evidence="3">Belongs to the non-disulfide-bridged peptide (NDBP) superfamily. Long chain multifunctional peptide (group 2) family.</text>
</comment>
<proteinExistence type="inferred from homology"/>
<feature type="signal peptide" evidence="2">
    <location>
        <begin position="1"/>
        <end position="24"/>
    </location>
</feature>
<feature type="chain" id="PRO_0000231516" description="Anionic peptide clone 8">
    <location>
        <begin position="25"/>
        <end position="74"/>
    </location>
</feature>
<organism>
    <name type="scientific">Tityus costatus</name>
    <name type="common">Brazilian scorpion</name>
    <dbReference type="NCBI Taxonomy" id="309814"/>
    <lineage>
        <taxon>Eukaryota</taxon>
        <taxon>Metazoa</taxon>
        <taxon>Ecdysozoa</taxon>
        <taxon>Arthropoda</taxon>
        <taxon>Chelicerata</taxon>
        <taxon>Arachnida</taxon>
        <taxon>Scorpiones</taxon>
        <taxon>Buthida</taxon>
        <taxon>Buthoidea</taxon>
        <taxon>Buthidae</taxon>
        <taxon>Tityus</taxon>
    </lineage>
</organism>
<accession>Q5G8B1</accession>
<dbReference type="EMBL" id="AY740690">
    <property type="protein sequence ID" value="AAW72460.1"/>
    <property type="molecule type" value="mRNA"/>
</dbReference>
<dbReference type="GO" id="GO:0005576">
    <property type="term" value="C:extracellular region"/>
    <property type="evidence" value="ECO:0007669"/>
    <property type="project" value="UniProtKB-SubCell"/>
</dbReference>
<dbReference type="GO" id="GO:0042742">
    <property type="term" value="P:defense response to bacterium"/>
    <property type="evidence" value="ECO:0007669"/>
    <property type="project" value="UniProtKB-KW"/>
</dbReference>